<gene>
    <name evidence="1" type="primary">miaA</name>
    <name type="ordered locus">PMM1635</name>
</gene>
<comment type="function">
    <text evidence="1">Catalyzes the transfer of a dimethylallyl group onto the adenine at position 37 in tRNAs that read codons beginning with uridine, leading to the formation of N6-(dimethylallyl)adenosine (i(6)A).</text>
</comment>
<comment type="catalytic activity">
    <reaction evidence="1">
        <text>adenosine(37) in tRNA + dimethylallyl diphosphate = N(6)-dimethylallyladenosine(37) in tRNA + diphosphate</text>
        <dbReference type="Rhea" id="RHEA:26482"/>
        <dbReference type="Rhea" id="RHEA-COMP:10162"/>
        <dbReference type="Rhea" id="RHEA-COMP:10375"/>
        <dbReference type="ChEBI" id="CHEBI:33019"/>
        <dbReference type="ChEBI" id="CHEBI:57623"/>
        <dbReference type="ChEBI" id="CHEBI:74411"/>
        <dbReference type="ChEBI" id="CHEBI:74415"/>
        <dbReference type="EC" id="2.5.1.75"/>
    </reaction>
</comment>
<comment type="cofactor">
    <cofactor evidence="1">
        <name>Mg(2+)</name>
        <dbReference type="ChEBI" id="CHEBI:18420"/>
    </cofactor>
</comment>
<comment type="subunit">
    <text evidence="1">Monomer.</text>
</comment>
<comment type="similarity">
    <text evidence="1">Belongs to the IPP transferase family.</text>
</comment>
<accession>Q7TU25</accession>
<proteinExistence type="inferred from homology"/>
<keyword id="KW-0067">ATP-binding</keyword>
<keyword id="KW-0460">Magnesium</keyword>
<keyword id="KW-0547">Nucleotide-binding</keyword>
<keyword id="KW-0808">Transferase</keyword>
<keyword id="KW-0819">tRNA processing</keyword>
<sequence>MFQPKPLVIVLIGPTASGKTELGIEIAKYFNLNIHNVDSRQLYRFMDIGTAKPTKEQQKTIKHFLIDLEEPSSQVNAKQFQEIATKSINRELNQNRIPFLIGGSGLYMNSIIKGFFAPNVPPQKVLRSQFEKLGQEKCWELLKICDPVLTKKINYADQVRTIRALEVFYVTGKPISSQKFQNPPPWKILELGLYREDLKERIFKRTKNMFEFGIIDETKKIINQYGSNLPLLETIGYREAKDVIKENLKLEKAIEITTTKTIQFAKRQKTWFRNKNNPIWLNNKNLLKDAIINIKHALR</sequence>
<evidence type="ECO:0000255" key="1">
    <source>
        <dbReference type="HAMAP-Rule" id="MF_00185"/>
    </source>
</evidence>
<organism>
    <name type="scientific">Prochlorococcus marinus subsp. pastoris (strain CCMP1986 / NIES-2087 / MED4)</name>
    <dbReference type="NCBI Taxonomy" id="59919"/>
    <lineage>
        <taxon>Bacteria</taxon>
        <taxon>Bacillati</taxon>
        <taxon>Cyanobacteriota</taxon>
        <taxon>Cyanophyceae</taxon>
        <taxon>Synechococcales</taxon>
        <taxon>Prochlorococcaceae</taxon>
        <taxon>Prochlorococcus</taxon>
    </lineage>
</organism>
<name>MIAA_PROMP</name>
<protein>
    <recommendedName>
        <fullName evidence="1">tRNA dimethylallyltransferase</fullName>
        <ecNumber evidence="1">2.5.1.75</ecNumber>
    </recommendedName>
    <alternativeName>
        <fullName evidence="1">Dimethylallyl diphosphate:tRNA dimethylallyltransferase</fullName>
        <shortName evidence="1">DMAPP:tRNA dimethylallyltransferase</shortName>
        <shortName evidence="1">DMATase</shortName>
    </alternativeName>
    <alternativeName>
        <fullName evidence="1">Isopentenyl-diphosphate:tRNA isopentenyltransferase</fullName>
        <shortName evidence="1">IPP transferase</shortName>
        <shortName evidence="1">IPPT</shortName>
        <shortName evidence="1">IPTase</shortName>
    </alternativeName>
</protein>
<dbReference type="EC" id="2.5.1.75" evidence="1"/>
<dbReference type="EMBL" id="BX548174">
    <property type="protein sequence ID" value="CAE20094.1"/>
    <property type="molecule type" value="Genomic_DNA"/>
</dbReference>
<dbReference type="RefSeq" id="WP_011133262.1">
    <property type="nucleotide sequence ID" value="NC_005072.1"/>
</dbReference>
<dbReference type="SMR" id="Q7TU25"/>
<dbReference type="STRING" id="59919.PMM1635"/>
<dbReference type="KEGG" id="pmm:PMM1635"/>
<dbReference type="eggNOG" id="COG0324">
    <property type="taxonomic scope" value="Bacteria"/>
</dbReference>
<dbReference type="HOGENOM" id="CLU_032616_0_1_3"/>
<dbReference type="OrthoDB" id="9776390at2"/>
<dbReference type="Proteomes" id="UP000001026">
    <property type="component" value="Chromosome"/>
</dbReference>
<dbReference type="GO" id="GO:0005524">
    <property type="term" value="F:ATP binding"/>
    <property type="evidence" value="ECO:0007669"/>
    <property type="project" value="UniProtKB-UniRule"/>
</dbReference>
<dbReference type="GO" id="GO:0052381">
    <property type="term" value="F:tRNA dimethylallyltransferase activity"/>
    <property type="evidence" value="ECO:0007669"/>
    <property type="project" value="UniProtKB-UniRule"/>
</dbReference>
<dbReference type="GO" id="GO:0006400">
    <property type="term" value="P:tRNA modification"/>
    <property type="evidence" value="ECO:0007669"/>
    <property type="project" value="TreeGrafter"/>
</dbReference>
<dbReference type="Gene3D" id="1.10.20.140">
    <property type="match status" value="1"/>
</dbReference>
<dbReference type="Gene3D" id="3.40.50.300">
    <property type="entry name" value="P-loop containing nucleotide triphosphate hydrolases"/>
    <property type="match status" value="1"/>
</dbReference>
<dbReference type="HAMAP" id="MF_00185">
    <property type="entry name" value="IPP_trans"/>
    <property type="match status" value="1"/>
</dbReference>
<dbReference type="InterPro" id="IPR039657">
    <property type="entry name" value="Dimethylallyltransferase"/>
</dbReference>
<dbReference type="InterPro" id="IPR018022">
    <property type="entry name" value="IPT"/>
</dbReference>
<dbReference type="InterPro" id="IPR027417">
    <property type="entry name" value="P-loop_NTPase"/>
</dbReference>
<dbReference type="NCBIfam" id="TIGR00174">
    <property type="entry name" value="miaA"/>
    <property type="match status" value="1"/>
</dbReference>
<dbReference type="PANTHER" id="PTHR11088">
    <property type="entry name" value="TRNA DIMETHYLALLYLTRANSFERASE"/>
    <property type="match status" value="1"/>
</dbReference>
<dbReference type="PANTHER" id="PTHR11088:SF60">
    <property type="entry name" value="TRNA DIMETHYLALLYLTRANSFERASE"/>
    <property type="match status" value="1"/>
</dbReference>
<dbReference type="Pfam" id="PF01715">
    <property type="entry name" value="IPPT"/>
    <property type="match status" value="1"/>
</dbReference>
<dbReference type="SUPFAM" id="SSF52540">
    <property type="entry name" value="P-loop containing nucleoside triphosphate hydrolases"/>
    <property type="match status" value="1"/>
</dbReference>
<reference key="1">
    <citation type="journal article" date="2003" name="Nature">
        <title>Genome divergence in two Prochlorococcus ecotypes reflects oceanic niche differentiation.</title>
        <authorList>
            <person name="Rocap G."/>
            <person name="Larimer F.W."/>
            <person name="Lamerdin J.E."/>
            <person name="Malfatti S."/>
            <person name="Chain P."/>
            <person name="Ahlgren N.A."/>
            <person name="Arellano A."/>
            <person name="Coleman M."/>
            <person name="Hauser L."/>
            <person name="Hess W.R."/>
            <person name="Johnson Z.I."/>
            <person name="Land M.L."/>
            <person name="Lindell D."/>
            <person name="Post A.F."/>
            <person name="Regala W."/>
            <person name="Shah M."/>
            <person name="Shaw S.L."/>
            <person name="Steglich C."/>
            <person name="Sullivan M.B."/>
            <person name="Ting C.S."/>
            <person name="Tolonen A."/>
            <person name="Webb E.A."/>
            <person name="Zinser E.R."/>
            <person name="Chisholm S.W."/>
        </authorList>
    </citation>
    <scope>NUCLEOTIDE SEQUENCE [LARGE SCALE GENOMIC DNA]</scope>
    <source>
        <strain>CCMP1986 / NIES-2087 / MED4</strain>
    </source>
</reference>
<feature type="chain" id="PRO_0000163955" description="tRNA dimethylallyltransferase">
    <location>
        <begin position="1"/>
        <end position="299"/>
    </location>
</feature>
<feature type="region of interest" description="Interaction with substrate tRNA" evidence="1">
    <location>
        <begin position="38"/>
        <end position="41"/>
    </location>
</feature>
<feature type="binding site" evidence="1">
    <location>
        <begin position="13"/>
        <end position="20"/>
    </location>
    <ligand>
        <name>ATP</name>
        <dbReference type="ChEBI" id="CHEBI:30616"/>
    </ligand>
</feature>
<feature type="binding site" evidence="1">
    <location>
        <begin position="15"/>
        <end position="20"/>
    </location>
    <ligand>
        <name>substrate</name>
    </ligand>
</feature>
<feature type="site" description="Interaction with substrate tRNA" evidence="1">
    <location>
        <position position="104"/>
    </location>
</feature>